<organismHost>
    <name type="scientific">Ornithodoros</name>
    <name type="common">relapsing fever ticks</name>
    <dbReference type="NCBI Taxonomy" id="6937"/>
</organismHost>
<organismHost>
    <name type="scientific">Phacochoerus aethiopicus</name>
    <name type="common">Warthog</name>
    <dbReference type="NCBI Taxonomy" id="85517"/>
</organismHost>
<organismHost>
    <name type="scientific">Phacochoerus africanus</name>
    <name type="common">Warthog</name>
    <dbReference type="NCBI Taxonomy" id="41426"/>
</organismHost>
<organismHost>
    <name type="scientific">Potamochoerus larvatus</name>
    <name type="common">Bushpig</name>
    <dbReference type="NCBI Taxonomy" id="273792"/>
</organismHost>
<organismHost>
    <name type="scientific">Sus scrofa</name>
    <name type="common">Pig</name>
    <dbReference type="NCBI Taxonomy" id="9823"/>
</organismHost>
<feature type="chain" id="PRO_0000373155" description="DNA-directed RNA polymerase subunit 6 homolog">
    <location>
        <begin position="1"/>
        <end position="147"/>
    </location>
</feature>
<feature type="region of interest" description="Disordered" evidence="2">
    <location>
        <begin position="20"/>
        <end position="39"/>
    </location>
</feature>
<protein>
    <recommendedName>
        <fullName evidence="1">DNA-directed RNA polymerase subunit 6 homolog</fullName>
        <shortName evidence="3">RPB6 homolog</shortName>
    </recommendedName>
</protein>
<name>RPB6_ASFK5</name>
<dbReference type="EMBL" id="AY261360">
    <property type="status" value="NOT_ANNOTATED_CDS"/>
    <property type="molecule type" value="Genomic_DNA"/>
</dbReference>
<dbReference type="SMR" id="P0C9D9"/>
<dbReference type="Proteomes" id="UP000000861">
    <property type="component" value="Segment"/>
</dbReference>
<dbReference type="GO" id="GO:0000428">
    <property type="term" value="C:DNA-directed RNA polymerase complex"/>
    <property type="evidence" value="ECO:0007669"/>
    <property type="project" value="UniProtKB-KW"/>
</dbReference>
<dbReference type="GO" id="GO:0030430">
    <property type="term" value="C:host cell cytoplasm"/>
    <property type="evidence" value="ECO:0007669"/>
    <property type="project" value="UniProtKB-SubCell"/>
</dbReference>
<dbReference type="GO" id="GO:0044423">
    <property type="term" value="C:virion component"/>
    <property type="evidence" value="ECO:0007669"/>
    <property type="project" value="UniProtKB-KW"/>
</dbReference>
<dbReference type="GO" id="GO:0003677">
    <property type="term" value="F:DNA binding"/>
    <property type="evidence" value="ECO:0007669"/>
    <property type="project" value="InterPro"/>
</dbReference>
<dbReference type="GO" id="GO:0003899">
    <property type="term" value="F:DNA-directed RNA polymerase activity"/>
    <property type="evidence" value="ECO:0007669"/>
    <property type="project" value="InterPro"/>
</dbReference>
<dbReference type="GO" id="GO:0006360">
    <property type="term" value="P:transcription by RNA polymerase I"/>
    <property type="evidence" value="ECO:0007669"/>
    <property type="project" value="TreeGrafter"/>
</dbReference>
<dbReference type="GO" id="GO:0006366">
    <property type="term" value="P:transcription by RNA polymerase II"/>
    <property type="evidence" value="ECO:0007669"/>
    <property type="project" value="TreeGrafter"/>
</dbReference>
<dbReference type="GO" id="GO:0042797">
    <property type="term" value="P:tRNA transcription by RNA polymerase III"/>
    <property type="evidence" value="ECO:0007669"/>
    <property type="project" value="TreeGrafter"/>
</dbReference>
<dbReference type="GO" id="GO:0019083">
    <property type="term" value="P:viral transcription"/>
    <property type="evidence" value="ECO:0007669"/>
    <property type="project" value="UniProtKB-KW"/>
</dbReference>
<dbReference type="Gene3D" id="3.90.940.10">
    <property type="match status" value="1"/>
</dbReference>
<dbReference type="InterPro" id="IPR020708">
    <property type="entry name" value="DNA-dir_RNA_polK_14-18kDa_CS"/>
</dbReference>
<dbReference type="InterPro" id="IPR006110">
    <property type="entry name" value="Pol_omega/Rpo6/RPB6"/>
</dbReference>
<dbReference type="InterPro" id="IPR036161">
    <property type="entry name" value="RPB6/omega-like_sf"/>
</dbReference>
<dbReference type="InterPro" id="IPR006111">
    <property type="entry name" value="Rpo6/Rpb6"/>
</dbReference>
<dbReference type="PANTHER" id="PTHR47227">
    <property type="entry name" value="DNA-DIRECTED RNA POLYMERASE SUBUNIT K"/>
    <property type="match status" value="1"/>
</dbReference>
<dbReference type="PANTHER" id="PTHR47227:SF5">
    <property type="entry name" value="DNA-DIRECTED RNA POLYMERASES I, II, AND III SUBUNIT RPABC2"/>
    <property type="match status" value="1"/>
</dbReference>
<dbReference type="Pfam" id="PF01192">
    <property type="entry name" value="RNA_pol_Rpb6"/>
    <property type="match status" value="1"/>
</dbReference>
<dbReference type="PIRSF" id="PIRSF000778">
    <property type="entry name" value="RpoK/RPB6"/>
    <property type="match status" value="1"/>
</dbReference>
<dbReference type="SMART" id="SM01409">
    <property type="entry name" value="RNA_pol_Rpb6"/>
    <property type="match status" value="1"/>
</dbReference>
<dbReference type="SUPFAM" id="SSF63562">
    <property type="entry name" value="RPB6/omega subunit-like"/>
    <property type="match status" value="1"/>
</dbReference>
<dbReference type="PROSITE" id="PS01111">
    <property type="entry name" value="RNA_POL_K_14KD"/>
    <property type="match status" value="1"/>
</dbReference>
<proteinExistence type="inferred from homology"/>
<sequence length="147" mass="16637">MADNDNEDSIMDDLVEEYVETEEENFVDSEEESEDKDEIVESPSICEGFVQASSQTLVVIPDNERITSNVLTTFEATRLVAVRAQQLAINGSTMLKKKYSSPIDIAKQELFNRKIPLLVMRCIKVTPDGQKIVEIWNPREMGIPLLD</sequence>
<keyword id="KW-0240">DNA-directed RNA polymerase</keyword>
<keyword id="KW-1035">Host cytoplasm</keyword>
<keyword id="KW-0804">Transcription</keyword>
<keyword id="KW-1195">Viral transcription</keyword>
<keyword id="KW-0946">Virion</keyword>
<organism>
    <name type="scientific">African swine fever virus (isolate Pig/Kenya/KEN-50/1950)</name>
    <name type="common">ASFV</name>
    <dbReference type="NCBI Taxonomy" id="561445"/>
    <lineage>
        <taxon>Viruses</taxon>
        <taxon>Varidnaviria</taxon>
        <taxon>Bamfordvirae</taxon>
        <taxon>Nucleocytoviricota</taxon>
        <taxon>Pokkesviricetes</taxon>
        <taxon>Asfuvirales</taxon>
        <taxon>Asfarviridae</taxon>
        <taxon>Asfivirus</taxon>
        <taxon>African swine fever virus</taxon>
    </lineage>
</organism>
<comment type="function">
    <text evidence="1">Component of the DNA-directed RNA polymerase (RNAP) that catalyzes the transcription in the cytoplasm of viral DNA into RNA using the four ribonucleoside triphosphates as substrates.</text>
</comment>
<comment type="subunit">
    <text evidence="1">Part of the viral DNA-directed RNA polymerase that consists of 8 polII-like subunits (RPB1, RPB2, RPB3, RPB5, RPB6, RPB7, RPB9, RPB10), a capping enzyme and a termination factor.</text>
</comment>
<comment type="subcellular location">
    <subcellularLocation>
        <location evidence="3">Host cytoplasm</location>
    </subcellularLocation>
    <subcellularLocation>
        <location evidence="1">Virion</location>
    </subcellularLocation>
    <text evidence="1">Found in association with viral nucleoid.</text>
</comment>
<comment type="similarity">
    <text evidence="3">Belongs to the archaeal RpoK/eukaryotic RPB6 RNA polymerase subunit family.</text>
</comment>
<evidence type="ECO:0000250" key="1">
    <source>
        <dbReference type="UniProtKB" id="P42484"/>
    </source>
</evidence>
<evidence type="ECO:0000256" key="2">
    <source>
        <dbReference type="SAM" id="MobiDB-lite"/>
    </source>
</evidence>
<evidence type="ECO:0000305" key="3"/>
<accession>P0C9D9</accession>
<reference key="1">
    <citation type="submission" date="2003-03" db="EMBL/GenBank/DDBJ databases">
        <title>African swine fever virus genomes.</title>
        <authorList>
            <person name="Kutish G.F."/>
            <person name="Rock D.L."/>
        </authorList>
    </citation>
    <scope>NUCLEOTIDE SEQUENCE [LARGE SCALE GENOMIC DNA]</scope>
</reference>
<gene>
    <name type="ordered locus">Ken-081</name>
</gene>